<name>ATP6_TROHI</name>
<accession>O03570</accession>
<accession>O03358</accession>
<dbReference type="EMBL" id="U83494">
    <property type="protein sequence ID" value="AAB84365.1"/>
    <property type="molecule type" value="Genomic_DNA"/>
</dbReference>
<dbReference type="EMBL" id="U83496">
    <property type="protein sequence ID" value="AAB84367.1"/>
    <property type="molecule type" value="Genomic_DNA"/>
</dbReference>
<dbReference type="EMBL" id="U83497">
    <property type="protein sequence ID" value="AAB84368.1"/>
    <property type="molecule type" value="Genomic_DNA"/>
</dbReference>
<dbReference type="GO" id="GO:0005743">
    <property type="term" value="C:mitochondrial inner membrane"/>
    <property type="evidence" value="ECO:0007669"/>
    <property type="project" value="UniProtKB-SubCell"/>
</dbReference>
<dbReference type="GO" id="GO:0045259">
    <property type="term" value="C:proton-transporting ATP synthase complex"/>
    <property type="evidence" value="ECO:0000250"/>
    <property type="project" value="UniProtKB"/>
</dbReference>
<dbReference type="GO" id="GO:0015252">
    <property type="term" value="F:proton channel activity"/>
    <property type="evidence" value="ECO:0000250"/>
    <property type="project" value="UniProtKB"/>
</dbReference>
<dbReference type="GO" id="GO:0046933">
    <property type="term" value="F:proton-transporting ATP synthase activity, rotational mechanism"/>
    <property type="evidence" value="ECO:0007669"/>
    <property type="project" value="TreeGrafter"/>
</dbReference>
<dbReference type="GO" id="GO:0015986">
    <property type="term" value="P:proton motive force-driven ATP synthesis"/>
    <property type="evidence" value="ECO:0000250"/>
    <property type="project" value="UniProtKB"/>
</dbReference>
<dbReference type="GO" id="GO:1902600">
    <property type="term" value="P:proton transmembrane transport"/>
    <property type="evidence" value="ECO:0000250"/>
    <property type="project" value="UniProtKB"/>
</dbReference>
<dbReference type="CDD" id="cd00310">
    <property type="entry name" value="ATP-synt_Fo_a_6"/>
    <property type="match status" value="1"/>
</dbReference>
<dbReference type="FunFam" id="1.20.120.220:FF:000004">
    <property type="entry name" value="ATP synthase subunit a"/>
    <property type="match status" value="1"/>
</dbReference>
<dbReference type="Gene3D" id="1.20.120.220">
    <property type="entry name" value="ATP synthase, F0 complex, subunit A"/>
    <property type="match status" value="1"/>
</dbReference>
<dbReference type="InterPro" id="IPR000568">
    <property type="entry name" value="ATP_synth_F0_asu"/>
</dbReference>
<dbReference type="InterPro" id="IPR023011">
    <property type="entry name" value="ATP_synth_F0_asu_AS"/>
</dbReference>
<dbReference type="InterPro" id="IPR045083">
    <property type="entry name" value="ATP_synth_F0_asu_bact/mt"/>
</dbReference>
<dbReference type="InterPro" id="IPR035908">
    <property type="entry name" value="F0_ATP_A_sf"/>
</dbReference>
<dbReference type="NCBIfam" id="TIGR01131">
    <property type="entry name" value="ATP_synt_6_or_A"/>
    <property type="match status" value="1"/>
</dbReference>
<dbReference type="PANTHER" id="PTHR11410">
    <property type="entry name" value="ATP SYNTHASE SUBUNIT A"/>
    <property type="match status" value="1"/>
</dbReference>
<dbReference type="PANTHER" id="PTHR11410:SF0">
    <property type="entry name" value="ATP SYNTHASE SUBUNIT A"/>
    <property type="match status" value="1"/>
</dbReference>
<dbReference type="Pfam" id="PF00119">
    <property type="entry name" value="ATP-synt_A"/>
    <property type="match status" value="1"/>
</dbReference>
<dbReference type="PRINTS" id="PR00123">
    <property type="entry name" value="ATPASEA"/>
</dbReference>
<dbReference type="SUPFAM" id="SSF81336">
    <property type="entry name" value="F1F0 ATP synthase subunit A"/>
    <property type="match status" value="1"/>
</dbReference>
<dbReference type="PROSITE" id="PS00449">
    <property type="entry name" value="ATPASE_A"/>
    <property type="match status" value="1"/>
</dbReference>
<gene>
    <name evidence="1" type="primary">MT-ATP6</name>
    <name type="synonym">ATP6</name>
    <name type="synonym">ATPASE6</name>
    <name type="synonym">MTATP6</name>
</gene>
<feature type="chain" id="PRO_0000082179" description="ATP synthase F(0) complex subunit a">
    <location>
        <begin position="1" status="less than"/>
        <end position="212" status="greater than"/>
    </location>
</feature>
<feature type="transmembrane region" description="Helical" evidence="2">
    <location>
        <begin position="3"/>
        <end position="23"/>
    </location>
</feature>
<feature type="transmembrane region" description="Helical" evidence="2">
    <location>
        <begin position="58"/>
        <end position="78"/>
    </location>
</feature>
<feature type="transmembrane region" description="Helical" evidence="2">
    <location>
        <begin position="87"/>
        <end position="107"/>
    </location>
</feature>
<feature type="transmembrane region" description="Helical" evidence="2">
    <location>
        <begin position="128"/>
        <end position="148"/>
    </location>
</feature>
<feature type="transmembrane region" description="Helical" evidence="2">
    <location>
        <begin position="169"/>
        <end position="189"/>
    </location>
</feature>
<feature type="transmembrane region" description="Helical" evidence="2">
    <location>
        <begin position="192"/>
        <end position="212"/>
    </location>
</feature>
<feature type="sequence variant">
    <original>M</original>
    <variation>T</variation>
    <location>
        <position position="3"/>
    </location>
</feature>
<feature type="sequence variant">
    <original>V</original>
    <variation>M</variation>
    <location>
        <position position="187"/>
    </location>
</feature>
<feature type="sequence variant">
    <original>Y</original>
    <variation>I</variation>
    <location>
        <position position="211"/>
    </location>
</feature>
<feature type="non-terminal residue">
    <location>
        <position position="1"/>
    </location>
</feature>
<feature type="non-terminal residue">
    <location>
        <position position="212"/>
    </location>
</feature>
<proteinExistence type="inferred from homology"/>
<reference key="1">
    <citation type="journal article" date="1997" name="Proc. Natl. Acad. Sci. U.S.A.">
        <title>The role of habitat shift in the evolution of lizard morphology: evidence from tropical Tropidurus.</title>
        <authorList>
            <person name="Vitt L.J."/>
            <person name="Caldwell J.P."/>
            <person name="Zani P.A."/>
            <person name="Titus T.A."/>
        </authorList>
    </citation>
    <scope>NUCLEOTIDE SEQUENCE [GENOMIC DNA]</scope>
</reference>
<organism>
    <name type="scientific">Tropidurus hispidus</name>
    <name type="common">Peters' lava lizard</name>
    <name type="synonym">Agama hispida</name>
    <dbReference type="NCBI Taxonomy" id="44142"/>
    <lineage>
        <taxon>Eukaryota</taxon>
        <taxon>Metazoa</taxon>
        <taxon>Chordata</taxon>
        <taxon>Craniata</taxon>
        <taxon>Vertebrata</taxon>
        <taxon>Euteleostomi</taxon>
        <taxon>Lepidosauria</taxon>
        <taxon>Squamata</taxon>
        <taxon>Bifurcata</taxon>
        <taxon>Unidentata</taxon>
        <taxon>Episquamata</taxon>
        <taxon>Toxicofera</taxon>
        <taxon>Iguania</taxon>
        <taxon>Acrodonta</taxon>
        <taxon>Agamidae</taxon>
        <taxon>Agaminae</taxon>
        <taxon>Agama</taxon>
    </lineage>
</organism>
<protein>
    <recommendedName>
        <fullName evidence="1">ATP synthase F(0) complex subunit a</fullName>
    </recommendedName>
    <alternativeName>
        <fullName>F-ATPase protein 6</fullName>
    </alternativeName>
    <alternativeName>
        <fullName evidence="1">Proton-conducting channel, ATP synthase F(0) complex subunit a</fullName>
    </alternativeName>
</protein>
<sequence>PQMMGIPLILIAIFLPTLLIYTSPTRLSTNRMTTLQLWLTNTITKQLFLPVNTPGHKWAAMLMTLMIXLLSMNLLGLLPYTFTPTTQLSMNMALAIPLWLATVLTGLRNQPTASLGHLLPEGTPTPLIPLLIIIETVSLFIRPLALGVRLTANLTAGHLLIQLISTAAFVLLPMMTLTALSTFIVLVLLTGLEIAVAMIQAYVFTLLLTLYL</sequence>
<comment type="function">
    <text evidence="1">Subunit a, of the mitochondrial membrane ATP synthase complex (F(1)F(0) ATP synthase or Complex V) that produces ATP from ADP in the presence of a proton gradient across the membrane which is generated by electron transport complexes of the respiratory chain. ATP synthase complex consist of a soluble F(1) head domain - the catalytic core - and a membrane F(1) domain - the membrane proton channel. These two domains are linked by a central stalk rotating inside the F(1) region and a stationary peripheral stalk. During catalysis, ATP synthesis in the catalytic domain of F(1) is coupled via a rotary mechanism of the central stalk subunits to proton translocation. With the subunit c (ATP5MC1), forms the proton-conducting channel in the F(0) domain, that contains two crucial half-channels (inlet and outlet) that facilitate proton movement from the mitochondrial intermembrane space (IMS) into the matrix. Protons are taken up via the inlet half-channel and released through the outlet half-channel, following a Grotthuss mechanism.</text>
</comment>
<comment type="catalytic activity">
    <reaction evidence="1">
        <text>H(+)(in) = H(+)(out)</text>
        <dbReference type="Rhea" id="RHEA:34979"/>
        <dbReference type="ChEBI" id="CHEBI:15378"/>
    </reaction>
</comment>
<comment type="subunit">
    <text evidence="1">Component of the ATP synthase complex composed at least of ATP5F1A/subunit alpha, ATP5F1B/subunit beta, ATP5MC1/subunit c (homooctomer), MT-ATP6/subunit a, MT-ATP8/subunit 8, ATP5ME/subunit e, ATP5MF/subunit f, ATP5MG/subunit g, ATP5MK/subunit k, ATP5MJ/subunit j, ATP5F1C/subunit gamma, ATP5F1D/subunit delta, ATP5F1E/subunit epsilon, ATP5PF/subunit F6, ATP5PB/subunit b, ATP5PD/subunit d, ATP5PO/subunit OSCP. ATP synthase complex consists of a soluble F(1) head domain (subunits alpha(3) and beta(3)) - the catalytic core - and a membrane F(0) domain - the membrane proton channel (subunits c, a, 8, e, f, g, k and j). These two domains are linked by a central stalk (subunits gamma, delta, and epsilon) rotating inside the F1 region and a stationary peripheral stalk (subunits F6, b, d, and OSCP). Interacts with DNAJC30; interaction is direct.</text>
</comment>
<comment type="subcellular location">
    <subcellularLocation>
        <location>Mitochondrion inner membrane</location>
        <topology>Multi-pass membrane protein</topology>
    </subcellularLocation>
</comment>
<comment type="similarity">
    <text evidence="3">Belongs to the ATPase A chain family.</text>
</comment>
<keyword id="KW-0066">ATP synthesis</keyword>
<keyword id="KW-0138">CF(0)</keyword>
<keyword id="KW-0375">Hydrogen ion transport</keyword>
<keyword id="KW-0406">Ion transport</keyword>
<keyword id="KW-0472">Membrane</keyword>
<keyword id="KW-0496">Mitochondrion</keyword>
<keyword id="KW-0999">Mitochondrion inner membrane</keyword>
<keyword id="KW-0812">Transmembrane</keyword>
<keyword id="KW-1133">Transmembrane helix</keyword>
<keyword id="KW-0813">Transport</keyword>
<geneLocation type="mitochondrion"/>
<evidence type="ECO:0000250" key="1">
    <source>
        <dbReference type="UniProtKB" id="P00846"/>
    </source>
</evidence>
<evidence type="ECO:0000255" key="2"/>
<evidence type="ECO:0000305" key="3"/>